<proteinExistence type="inferred from homology"/>
<protein>
    <recommendedName>
        <fullName evidence="1">Small ribosomal subunit protein uS3</fullName>
    </recommendedName>
    <alternativeName>
        <fullName evidence="2">30S ribosomal protein S3</fullName>
    </alternativeName>
</protein>
<dbReference type="EMBL" id="AE008692">
    <property type="protein sequence ID" value="AAV89146.1"/>
    <property type="molecule type" value="Genomic_DNA"/>
</dbReference>
<dbReference type="RefSeq" id="WP_011240429.1">
    <property type="nucleotide sequence ID" value="NZ_CP035711.1"/>
</dbReference>
<dbReference type="SMR" id="Q5NQ59"/>
<dbReference type="STRING" id="264203.ZMO0522"/>
<dbReference type="GeneID" id="79904286"/>
<dbReference type="KEGG" id="zmo:ZMO0522"/>
<dbReference type="eggNOG" id="COG0092">
    <property type="taxonomic scope" value="Bacteria"/>
</dbReference>
<dbReference type="HOGENOM" id="CLU_058591_0_2_5"/>
<dbReference type="Proteomes" id="UP000001173">
    <property type="component" value="Chromosome"/>
</dbReference>
<dbReference type="GO" id="GO:0022627">
    <property type="term" value="C:cytosolic small ribosomal subunit"/>
    <property type="evidence" value="ECO:0007669"/>
    <property type="project" value="TreeGrafter"/>
</dbReference>
<dbReference type="GO" id="GO:0003729">
    <property type="term" value="F:mRNA binding"/>
    <property type="evidence" value="ECO:0007669"/>
    <property type="project" value="UniProtKB-UniRule"/>
</dbReference>
<dbReference type="GO" id="GO:0019843">
    <property type="term" value="F:rRNA binding"/>
    <property type="evidence" value="ECO:0007669"/>
    <property type="project" value="UniProtKB-UniRule"/>
</dbReference>
<dbReference type="GO" id="GO:0003735">
    <property type="term" value="F:structural constituent of ribosome"/>
    <property type="evidence" value="ECO:0007669"/>
    <property type="project" value="InterPro"/>
</dbReference>
<dbReference type="GO" id="GO:0006412">
    <property type="term" value="P:translation"/>
    <property type="evidence" value="ECO:0007669"/>
    <property type="project" value="UniProtKB-UniRule"/>
</dbReference>
<dbReference type="CDD" id="cd02412">
    <property type="entry name" value="KH-II_30S_S3"/>
    <property type="match status" value="1"/>
</dbReference>
<dbReference type="FunFam" id="3.30.1140.32:FF:000002">
    <property type="entry name" value="30S ribosomal protein S3"/>
    <property type="match status" value="1"/>
</dbReference>
<dbReference type="FunFam" id="3.30.300.20:FF:000001">
    <property type="entry name" value="30S ribosomal protein S3"/>
    <property type="match status" value="1"/>
</dbReference>
<dbReference type="Gene3D" id="3.30.300.20">
    <property type="match status" value="1"/>
</dbReference>
<dbReference type="Gene3D" id="3.30.1140.32">
    <property type="entry name" value="Ribosomal protein S3, C-terminal domain"/>
    <property type="match status" value="1"/>
</dbReference>
<dbReference type="HAMAP" id="MF_01309_B">
    <property type="entry name" value="Ribosomal_uS3_B"/>
    <property type="match status" value="1"/>
</dbReference>
<dbReference type="InterPro" id="IPR004087">
    <property type="entry name" value="KH_dom"/>
</dbReference>
<dbReference type="InterPro" id="IPR015946">
    <property type="entry name" value="KH_dom-like_a/b"/>
</dbReference>
<dbReference type="InterPro" id="IPR004044">
    <property type="entry name" value="KH_dom_type_2"/>
</dbReference>
<dbReference type="InterPro" id="IPR009019">
    <property type="entry name" value="KH_sf_prok-type"/>
</dbReference>
<dbReference type="InterPro" id="IPR036419">
    <property type="entry name" value="Ribosomal_S3_C_sf"/>
</dbReference>
<dbReference type="InterPro" id="IPR005704">
    <property type="entry name" value="Ribosomal_uS3_bac-typ"/>
</dbReference>
<dbReference type="InterPro" id="IPR001351">
    <property type="entry name" value="Ribosomal_uS3_C"/>
</dbReference>
<dbReference type="InterPro" id="IPR018280">
    <property type="entry name" value="Ribosomal_uS3_CS"/>
</dbReference>
<dbReference type="NCBIfam" id="TIGR01009">
    <property type="entry name" value="rpsC_bact"/>
    <property type="match status" value="1"/>
</dbReference>
<dbReference type="PANTHER" id="PTHR11760">
    <property type="entry name" value="30S/40S RIBOSOMAL PROTEIN S3"/>
    <property type="match status" value="1"/>
</dbReference>
<dbReference type="PANTHER" id="PTHR11760:SF19">
    <property type="entry name" value="SMALL RIBOSOMAL SUBUNIT PROTEIN US3C"/>
    <property type="match status" value="1"/>
</dbReference>
<dbReference type="Pfam" id="PF07650">
    <property type="entry name" value="KH_2"/>
    <property type="match status" value="1"/>
</dbReference>
<dbReference type="Pfam" id="PF00189">
    <property type="entry name" value="Ribosomal_S3_C"/>
    <property type="match status" value="1"/>
</dbReference>
<dbReference type="SMART" id="SM00322">
    <property type="entry name" value="KH"/>
    <property type="match status" value="1"/>
</dbReference>
<dbReference type="SUPFAM" id="SSF54814">
    <property type="entry name" value="Prokaryotic type KH domain (KH-domain type II)"/>
    <property type="match status" value="1"/>
</dbReference>
<dbReference type="SUPFAM" id="SSF54821">
    <property type="entry name" value="Ribosomal protein S3 C-terminal domain"/>
    <property type="match status" value="1"/>
</dbReference>
<dbReference type="PROSITE" id="PS50823">
    <property type="entry name" value="KH_TYPE_2"/>
    <property type="match status" value="1"/>
</dbReference>
<dbReference type="PROSITE" id="PS00548">
    <property type="entry name" value="RIBOSOMAL_S3"/>
    <property type="match status" value="1"/>
</dbReference>
<reference key="1">
    <citation type="journal article" date="2005" name="Nat. Biotechnol.">
        <title>The genome sequence of the ethanologenic bacterium Zymomonas mobilis ZM4.</title>
        <authorList>
            <person name="Seo J.-S."/>
            <person name="Chong H."/>
            <person name="Park H.S."/>
            <person name="Yoon K.-O."/>
            <person name="Jung C."/>
            <person name="Kim J.J."/>
            <person name="Hong J.H."/>
            <person name="Kim H."/>
            <person name="Kim J.-H."/>
            <person name="Kil J.-I."/>
            <person name="Park C.J."/>
            <person name="Oh H.-M."/>
            <person name="Lee J.-S."/>
            <person name="Jin S.-J."/>
            <person name="Um H.-W."/>
            <person name="Lee H.-J."/>
            <person name="Oh S.-J."/>
            <person name="Kim J.Y."/>
            <person name="Kang H.L."/>
            <person name="Lee S.Y."/>
            <person name="Lee K.J."/>
            <person name="Kang H.S."/>
        </authorList>
    </citation>
    <scope>NUCLEOTIDE SEQUENCE [LARGE SCALE GENOMIC DNA]</scope>
    <source>
        <strain>ATCC 31821 / ZM4 / CP4</strain>
    </source>
</reference>
<keyword id="KW-1185">Reference proteome</keyword>
<keyword id="KW-0687">Ribonucleoprotein</keyword>
<keyword id="KW-0689">Ribosomal protein</keyword>
<keyword id="KW-0694">RNA-binding</keyword>
<keyword id="KW-0699">rRNA-binding</keyword>
<gene>
    <name evidence="1" type="primary">rpsC</name>
    <name type="ordered locus">ZMO0522</name>
</gene>
<sequence>MGHKSNPIGMRLQINRTWDSRWFAQGGDYGQLLLEDIKIRKFIMKTLPQAAISKVVIERPAKLCRISIYAARPGVIIGKKGADIEKLRKKLDSMTESGVSLNIVEIRKPEIDAQLVAQGIADQLERRVAFRRAMKRAVQSALRLGAQGVRITCGGRLGGAEIARTEWYREGRVPLHTLRANVDYAEAEAHTAYGVCGIKVWIFKGEIMAHDPLAQDRLMVEAQTSGVRPTR</sequence>
<accession>Q5NQ59</accession>
<feature type="chain" id="PRO_0000130244" description="Small ribosomal subunit protein uS3">
    <location>
        <begin position="1"/>
        <end position="231"/>
    </location>
</feature>
<feature type="domain" description="KH type-2" evidence="1">
    <location>
        <begin position="39"/>
        <end position="107"/>
    </location>
</feature>
<name>RS3_ZYMMO</name>
<organism>
    <name type="scientific">Zymomonas mobilis subsp. mobilis (strain ATCC 31821 / ZM4 / CP4)</name>
    <dbReference type="NCBI Taxonomy" id="264203"/>
    <lineage>
        <taxon>Bacteria</taxon>
        <taxon>Pseudomonadati</taxon>
        <taxon>Pseudomonadota</taxon>
        <taxon>Alphaproteobacteria</taxon>
        <taxon>Sphingomonadales</taxon>
        <taxon>Zymomonadaceae</taxon>
        <taxon>Zymomonas</taxon>
    </lineage>
</organism>
<comment type="function">
    <text evidence="1">Binds the lower part of the 30S subunit head. Binds mRNA in the 70S ribosome, positioning it for translation.</text>
</comment>
<comment type="subunit">
    <text evidence="1">Part of the 30S ribosomal subunit. Forms a tight complex with proteins S10 and S14.</text>
</comment>
<comment type="similarity">
    <text evidence="1">Belongs to the universal ribosomal protein uS3 family.</text>
</comment>
<evidence type="ECO:0000255" key="1">
    <source>
        <dbReference type="HAMAP-Rule" id="MF_01309"/>
    </source>
</evidence>
<evidence type="ECO:0000305" key="2"/>